<gene>
    <name evidence="1" type="primary">psbI</name>
    <name type="ordered locus">PMT_1840</name>
</gene>
<comment type="function">
    <text evidence="1">One of the components of the core complex of photosystem II (PSII), required for its stability and/or assembly. PSII is a light-driven water:plastoquinone oxidoreductase that uses light energy to abstract electrons from H(2)O, generating O(2) and a proton gradient subsequently used for ATP formation. It consists of a core antenna complex that captures photons, and an electron transfer chain that converts photonic excitation into a charge separation.</text>
</comment>
<comment type="subunit">
    <text evidence="2">PSII is composed of 1 copy each of membrane proteins PsbA, PsbB, PsbC, PsbD, PsbE, PsbF, PsbH, PsbI, PsbJ, PsbK, PsbL, PsbM, PsbT, PsbX, PsbY, Psb30/Ycf12, peripheral proteins PsbO, CyanoQ (PsbQ), PsbU, PsbV and a large number of cofactors. It forms dimeric complexes.</text>
</comment>
<comment type="subcellular location">
    <subcellularLocation>
        <location evidence="1">Cellular thylakoid membrane</location>
        <topology evidence="1">Single-pass membrane protein</topology>
    </subcellularLocation>
</comment>
<comment type="similarity">
    <text evidence="1">Belongs to the PsbI family.</text>
</comment>
<feature type="chain" id="PRO_0000298298" description="Photosystem II reaction center protein I">
    <location>
        <begin position="1"/>
        <end position="39"/>
    </location>
</feature>
<feature type="transmembrane region" description="Helical" evidence="1">
    <location>
        <begin position="6"/>
        <end position="26"/>
    </location>
</feature>
<accession>Q7V4U9</accession>
<reference key="1">
    <citation type="journal article" date="2003" name="Nature">
        <title>Genome divergence in two Prochlorococcus ecotypes reflects oceanic niche differentiation.</title>
        <authorList>
            <person name="Rocap G."/>
            <person name="Larimer F.W."/>
            <person name="Lamerdin J.E."/>
            <person name="Malfatti S."/>
            <person name="Chain P."/>
            <person name="Ahlgren N.A."/>
            <person name="Arellano A."/>
            <person name="Coleman M."/>
            <person name="Hauser L."/>
            <person name="Hess W.R."/>
            <person name="Johnson Z.I."/>
            <person name="Land M.L."/>
            <person name="Lindell D."/>
            <person name="Post A.F."/>
            <person name="Regala W."/>
            <person name="Shah M."/>
            <person name="Shaw S.L."/>
            <person name="Steglich C."/>
            <person name="Sullivan M.B."/>
            <person name="Ting C.S."/>
            <person name="Tolonen A."/>
            <person name="Webb E.A."/>
            <person name="Zinser E.R."/>
            <person name="Chisholm S.W."/>
        </authorList>
    </citation>
    <scope>NUCLEOTIDE SEQUENCE [LARGE SCALE GENOMIC DNA]</scope>
    <source>
        <strain>MIT 9313</strain>
    </source>
</reference>
<dbReference type="EMBL" id="BX548175">
    <property type="protein sequence ID" value="CAE22015.1"/>
    <property type="molecule type" value="Genomic_DNA"/>
</dbReference>
<dbReference type="RefSeq" id="WP_011131207.1">
    <property type="nucleotide sequence ID" value="NC_005071.1"/>
</dbReference>
<dbReference type="SMR" id="Q7V4U9"/>
<dbReference type="KEGG" id="pmt:PMT_1840"/>
<dbReference type="HOGENOM" id="CLU_212150_0_0_3"/>
<dbReference type="Proteomes" id="UP000001423">
    <property type="component" value="Chromosome"/>
</dbReference>
<dbReference type="GO" id="GO:0009539">
    <property type="term" value="C:photosystem II reaction center"/>
    <property type="evidence" value="ECO:0007669"/>
    <property type="project" value="InterPro"/>
</dbReference>
<dbReference type="GO" id="GO:0031676">
    <property type="term" value="C:plasma membrane-derived thylakoid membrane"/>
    <property type="evidence" value="ECO:0007669"/>
    <property type="project" value="UniProtKB-SubCell"/>
</dbReference>
<dbReference type="GO" id="GO:0015979">
    <property type="term" value="P:photosynthesis"/>
    <property type="evidence" value="ECO:0007669"/>
    <property type="project" value="UniProtKB-UniRule"/>
</dbReference>
<dbReference type="HAMAP" id="MF_01316">
    <property type="entry name" value="PSII_PsbI"/>
    <property type="match status" value="1"/>
</dbReference>
<dbReference type="InterPro" id="IPR003686">
    <property type="entry name" value="PSII_PsbI"/>
</dbReference>
<dbReference type="InterPro" id="IPR037271">
    <property type="entry name" value="PSII_PsbI_sf"/>
</dbReference>
<dbReference type="NCBIfam" id="NF002735">
    <property type="entry name" value="PRK02655.1"/>
    <property type="match status" value="1"/>
</dbReference>
<dbReference type="PANTHER" id="PTHR35772">
    <property type="entry name" value="PHOTOSYSTEM II REACTION CENTER PROTEIN I"/>
    <property type="match status" value="1"/>
</dbReference>
<dbReference type="PANTHER" id="PTHR35772:SF1">
    <property type="entry name" value="PHOTOSYSTEM II REACTION CENTER PROTEIN I"/>
    <property type="match status" value="1"/>
</dbReference>
<dbReference type="Pfam" id="PF02532">
    <property type="entry name" value="PsbI"/>
    <property type="match status" value="1"/>
</dbReference>
<dbReference type="SUPFAM" id="SSF161041">
    <property type="entry name" value="Photosystem II reaction center protein I, PsbI"/>
    <property type="match status" value="1"/>
</dbReference>
<organism>
    <name type="scientific">Prochlorococcus marinus (strain MIT 9313)</name>
    <dbReference type="NCBI Taxonomy" id="74547"/>
    <lineage>
        <taxon>Bacteria</taxon>
        <taxon>Bacillati</taxon>
        <taxon>Cyanobacteriota</taxon>
        <taxon>Cyanophyceae</taxon>
        <taxon>Synechococcales</taxon>
        <taxon>Prochlorococcaceae</taxon>
        <taxon>Prochlorococcus</taxon>
    </lineage>
</organism>
<keyword id="KW-0472">Membrane</keyword>
<keyword id="KW-0602">Photosynthesis</keyword>
<keyword id="KW-0604">Photosystem II</keyword>
<keyword id="KW-0674">Reaction center</keyword>
<keyword id="KW-1185">Reference proteome</keyword>
<keyword id="KW-0793">Thylakoid</keyword>
<keyword id="KW-0812">Transmembrane</keyword>
<keyword id="KW-1133">Transmembrane helix</keyword>
<protein>
    <recommendedName>
        <fullName evidence="1">Photosystem II reaction center protein I</fullName>
        <shortName evidence="1">PSII-I</shortName>
    </recommendedName>
    <alternativeName>
        <fullName evidence="1">PSII 4.4 kDa protein</fullName>
    </alternativeName>
</protein>
<name>PSBI_PROMM</name>
<evidence type="ECO:0000255" key="1">
    <source>
        <dbReference type="HAMAP-Rule" id="MF_01316"/>
    </source>
</evidence>
<evidence type="ECO:0000305" key="2"/>
<sequence length="39" mass="4398">MLALKLSVYSVVFFFIAVFVFGFLASDPSRTPARKDLED</sequence>
<proteinExistence type="inferred from homology"/>